<gene>
    <name evidence="1" type="primary">accA</name>
    <name type="ordered locus">Pden_2339</name>
</gene>
<name>ACCA_PARDP</name>
<evidence type="ECO:0000255" key="1">
    <source>
        <dbReference type="HAMAP-Rule" id="MF_00823"/>
    </source>
</evidence>
<evidence type="ECO:0000255" key="2">
    <source>
        <dbReference type="PROSITE-ProRule" id="PRU01137"/>
    </source>
</evidence>
<accession>A1B4I6</accession>
<sequence length="318" mass="34732">MTYLEFEKPLADLEGKAEELRALARKGEGVDLEKEAAALDRKAEEMLRDLYKQLDPWRKTQVARHPERPHCRDYVEALFTEYTPLAGDRAFGEDHAVMGGLARFKDQPCVVIGHEKGNDTKSRIFHNFGMARPEGYRKAIRLMDVADRFRLPVITLVDTPGAYPGKGAEERGQSEAIARSTEKCLQISVPLVSVVIGEGGSGGAVAFATANRIAMLEHSIYSVISPEGCASILWKDAEKMREAAHALKLTAQDLKKLEVIDRIISEPVGGAQRAPAEAIAAVGEAIAAMLGELAGKKPAELIKDRRQKFLAMGSKALG</sequence>
<protein>
    <recommendedName>
        <fullName evidence="1">Acetyl-coenzyme A carboxylase carboxyl transferase subunit alpha</fullName>
        <shortName evidence="1">ACCase subunit alpha</shortName>
        <shortName evidence="1">Acetyl-CoA carboxylase carboxyltransferase subunit alpha</shortName>
        <ecNumber evidence="1">2.1.3.15</ecNumber>
    </recommendedName>
</protein>
<keyword id="KW-0067">ATP-binding</keyword>
<keyword id="KW-0963">Cytoplasm</keyword>
<keyword id="KW-0275">Fatty acid biosynthesis</keyword>
<keyword id="KW-0276">Fatty acid metabolism</keyword>
<keyword id="KW-0444">Lipid biosynthesis</keyword>
<keyword id="KW-0443">Lipid metabolism</keyword>
<keyword id="KW-0547">Nucleotide-binding</keyword>
<keyword id="KW-1185">Reference proteome</keyword>
<keyword id="KW-0808">Transferase</keyword>
<proteinExistence type="inferred from homology"/>
<dbReference type="EC" id="2.1.3.15" evidence="1"/>
<dbReference type="EMBL" id="CP000489">
    <property type="protein sequence ID" value="ABL70430.1"/>
    <property type="molecule type" value="Genomic_DNA"/>
</dbReference>
<dbReference type="RefSeq" id="WP_011748623.1">
    <property type="nucleotide sequence ID" value="NC_008686.1"/>
</dbReference>
<dbReference type="SMR" id="A1B4I6"/>
<dbReference type="STRING" id="318586.Pden_2339"/>
<dbReference type="EnsemblBacteria" id="ABL70430">
    <property type="protein sequence ID" value="ABL70430"/>
    <property type="gene ID" value="Pden_2339"/>
</dbReference>
<dbReference type="GeneID" id="93450732"/>
<dbReference type="KEGG" id="pde:Pden_2339"/>
<dbReference type="eggNOG" id="COG0825">
    <property type="taxonomic scope" value="Bacteria"/>
</dbReference>
<dbReference type="HOGENOM" id="CLU_015486_0_2_5"/>
<dbReference type="OrthoDB" id="9808023at2"/>
<dbReference type="UniPathway" id="UPA00655">
    <property type="reaction ID" value="UER00711"/>
</dbReference>
<dbReference type="Proteomes" id="UP000000361">
    <property type="component" value="Chromosome 1"/>
</dbReference>
<dbReference type="GO" id="GO:0009317">
    <property type="term" value="C:acetyl-CoA carboxylase complex"/>
    <property type="evidence" value="ECO:0007669"/>
    <property type="project" value="InterPro"/>
</dbReference>
<dbReference type="GO" id="GO:0003989">
    <property type="term" value="F:acetyl-CoA carboxylase activity"/>
    <property type="evidence" value="ECO:0007669"/>
    <property type="project" value="InterPro"/>
</dbReference>
<dbReference type="GO" id="GO:0005524">
    <property type="term" value="F:ATP binding"/>
    <property type="evidence" value="ECO:0007669"/>
    <property type="project" value="UniProtKB-KW"/>
</dbReference>
<dbReference type="GO" id="GO:0016743">
    <property type="term" value="F:carboxyl- or carbamoyltransferase activity"/>
    <property type="evidence" value="ECO:0007669"/>
    <property type="project" value="UniProtKB-UniRule"/>
</dbReference>
<dbReference type="GO" id="GO:0006633">
    <property type="term" value="P:fatty acid biosynthetic process"/>
    <property type="evidence" value="ECO:0007669"/>
    <property type="project" value="UniProtKB-KW"/>
</dbReference>
<dbReference type="GO" id="GO:2001295">
    <property type="term" value="P:malonyl-CoA biosynthetic process"/>
    <property type="evidence" value="ECO:0007669"/>
    <property type="project" value="UniProtKB-UniRule"/>
</dbReference>
<dbReference type="Gene3D" id="3.90.226.10">
    <property type="entry name" value="2-enoyl-CoA Hydratase, Chain A, domain 1"/>
    <property type="match status" value="1"/>
</dbReference>
<dbReference type="HAMAP" id="MF_00823">
    <property type="entry name" value="AcetylCoA_CT_alpha"/>
    <property type="match status" value="1"/>
</dbReference>
<dbReference type="InterPro" id="IPR001095">
    <property type="entry name" value="Acetyl_CoA_COase_a_su"/>
</dbReference>
<dbReference type="InterPro" id="IPR029045">
    <property type="entry name" value="ClpP/crotonase-like_dom_sf"/>
</dbReference>
<dbReference type="InterPro" id="IPR011763">
    <property type="entry name" value="COA_CT_C"/>
</dbReference>
<dbReference type="NCBIfam" id="TIGR00513">
    <property type="entry name" value="accA"/>
    <property type="match status" value="1"/>
</dbReference>
<dbReference type="NCBIfam" id="NF041504">
    <property type="entry name" value="AccA_sub"/>
    <property type="match status" value="1"/>
</dbReference>
<dbReference type="NCBIfam" id="NF004344">
    <property type="entry name" value="PRK05724.1"/>
    <property type="match status" value="1"/>
</dbReference>
<dbReference type="PANTHER" id="PTHR42853">
    <property type="entry name" value="ACETYL-COENZYME A CARBOXYLASE CARBOXYL TRANSFERASE SUBUNIT ALPHA"/>
    <property type="match status" value="1"/>
</dbReference>
<dbReference type="PANTHER" id="PTHR42853:SF3">
    <property type="entry name" value="ACETYL-COENZYME A CARBOXYLASE CARBOXYL TRANSFERASE SUBUNIT ALPHA, CHLOROPLASTIC"/>
    <property type="match status" value="1"/>
</dbReference>
<dbReference type="Pfam" id="PF03255">
    <property type="entry name" value="ACCA"/>
    <property type="match status" value="1"/>
</dbReference>
<dbReference type="PRINTS" id="PR01069">
    <property type="entry name" value="ACCCTRFRASEA"/>
</dbReference>
<dbReference type="SUPFAM" id="SSF52096">
    <property type="entry name" value="ClpP/crotonase"/>
    <property type="match status" value="1"/>
</dbReference>
<dbReference type="PROSITE" id="PS50989">
    <property type="entry name" value="COA_CT_CTER"/>
    <property type="match status" value="1"/>
</dbReference>
<reference key="1">
    <citation type="submission" date="2006-12" db="EMBL/GenBank/DDBJ databases">
        <title>Complete sequence of chromosome 1 of Paracoccus denitrificans PD1222.</title>
        <authorList>
            <person name="Copeland A."/>
            <person name="Lucas S."/>
            <person name="Lapidus A."/>
            <person name="Barry K."/>
            <person name="Detter J.C."/>
            <person name="Glavina del Rio T."/>
            <person name="Hammon N."/>
            <person name="Israni S."/>
            <person name="Dalin E."/>
            <person name="Tice H."/>
            <person name="Pitluck S."/>
            <person name="Munk A.C."/>
            <person name="Brettin T."/>
            <person name="Bruce D."/>
            <person name="Han C."/>
            <person name="Tapia R."/>
            <person name="Gilna P."/>
            <person name="Schmutz J."/>
            <person name="Larimer F."/>
            <person name="Land M."/>
            <person name="Hauser L."/>
            <person name="Kyrpides N."/>
            <person name="Lykidis A."/>
            <person name="Spiro S."/>
            <person name="Richardson D.J."/>
            <person name="Moir J.W.B."/>
            <person name="Ferguson S.J."/>
            <person name="van Spanning R.J.M."/>
            <person name="Richardson P."/>
        </authorList>
    </citation>
    <scope>NUCLEOTIDE SEQUENCE [LARGE SCALE GENOMIC DNA]</scope>
    <source>
        <strain>Pd 1222</strain>
    </source>
</reference>
<feature type="chain" id="PRO_1000062645" description="Acetyl-coenzyme A carboxylase carboxyl transferase subunit alpha">
    <location>
        <begin position="1"/>
        <end position="318"/>
    </location>
</feature>
<feature type="domain" description="CoA carboxyltransferase C-terminal" evidence="2">
    <location>
        <begin position="38"/>
        <end position="292"/>
    </location>
</feature>
<organism>
    <name type="scientific">Paracoccus denitrificans (strain Pd 1222)</name>
    <dbReference type="NCBI Taxonomy" id="318586"/>
    <lineage>
        <taxon>Bacteria</taxon>
        <taxon>Pseudomonadati</taxon>
        <taxon>Pseudomonadota</taxon>
        <taxon>Alphaproteobacteria</taxon>
        <taxon>Rhodobacterales</taxon>
        <taxon>Paracoccaceae</taxon>
        <taxon>Paracoccus</taxon>
    </lineage>
</organism>
<comment type="function">
    <text evidence="1">Component of the acetyl coenzyme A carboxylase (ACC) complex. First, biotin carboxylase catalyzes the carboxylation of biotin on its carrier protein (BCCP) and then the CO(2) group is transferred by the carboxyltransferase to acetyl-CoA to form malonyl-CoA.</text>
</comment>
<comment type="catalytic activity">
    <reaction evidence="1">
        <text>N(6)-carboxybiotinyl-L-lysyl-[protein] + acetyl-CoA = N(6)-biotinyl-L-lysyl-[protein] + malonyl-CoA</text>
        <dbReference type="Rhea" id="RHEA:54728"/>
        <dbReference type="Rhea" id="RHEA-COMP:10505"/>
        <dbReference type="Rhea" id="RHEA-COMP:10506"/>
        <dbReference type="ChEBI" id="CHEBI:57288"/>
        <dbReference type="ChEBI" id="CHEBI:57384"/>
        <dbReference type="ChEBI" id="CHEBI:83144"/>
        <dbReference type="ChEBI" id="CHEBI:83145"/>
        <dbReference type="EC" id="2.1.3.15"/>
    </reaction>
</comment>
<comment type="pathway">
    <text evidence="1">Lipid metabolism; malonyl-CoA biosynthesis; malonyl-CoA from acetyl-CoA: step 1/1.</text>
</comment>
<comment type="subunit">
    <text evidence="1">Acetyl-CoA carboxylase is a heterohexamer composed of biotin carboxyl carrier protein (AccB), biotin carboxylase (AccC) and two subunits each of ACCase subunit alpha (AccA) and ACCase subunit beta (AccD).</text>
</comment>
<comment type="subcellular location">
    <subcellularLocation>
        <location evidence="1">Cytoplasm</location>
    </subcellularLocation>
</comment>
<comment type="similarity">
    <text evidence="1">Belongs to the AccA family.</text>
</comment>